<protein>
    <recommendedName>
        <fullName evidence="1">Probable phosphoketolase</fullName>
        <ecNumber evidence="1">4.1.2.-</ecNumber>
    </recommendedName>
</protein>
<accession>Q13B10</accession>
<dbReference type="EC" id="4.1.2.-" evidence="1"/>
<dbReference type="EMBL" id="CP000283">
    <property type="protein sequence ID" value="ABE38729.1"/>
    <property type="molecule type" value="Genomic_DNA"/>
</dbReference>
<dbReference type="SMR" id="Q13B10"/>
<dbReference type="STRING" id="316057.RPD_1492"/>
<dbReference type="KEGG" id="rpd:RPD_1492"/>
<dbReference type="eggNOG" id="COG3957">
    <property type="taxonomic scope" value="Bacteria"/>
</dbReference>
<dbReference type="HOGENOM" id="CLU_013954_2_0_5"/>
<dbReference type="BioCyc" id="RPAL316057:RPD_RS07545-MONOMER"/>
<dbReference type="Proteomes" id="UP000001818">
    <property type="component" value="Chromosome"/>
</dbReference>
<dbReference type="GO" id="GO:0016832">
    <property type="term" value="F:aldehyde-lyase activity"/>
    <property type="evidence" value="ECO:0007669"/>
    <property type="project" value="UniProtKB-UniRule"/>
</dbReference>
<dbReference type="GO" id="GO:0005975">
    <property type="term" value="P:carbohydrate metabolic process"/>
    <property type="evidence" value="ECO:0007669"/>
    <property type="project" value="InterPro"/>
</dbReference>
<dbReference type="FunFam" id="3.40.50.970:FF:000091">
    <property type="entry name" value="Xylulose-5-phosphate/fructose-6-phosphate phosphoketolase"/>
    <property type="match status" value="1"/>
</dbReference>
<dbReference type="Gene3D" id="3.40.50.920">
    <property type="match status" value="1"/>
</dbReference>
<dbReference type="Gene3D" id="3.40.50.970">
    <property type="match status" value="2"/>
</dbReference>
<dbReference type="HAMAP" id="MF_01403">
    <property type="entry name" value="Phosphoketolase"/>
    <property type="match status" value="1"/>
</dbReference>
<dbReference type="InterPro" id="IPR023962">
    <property type="entry name" value="Phosphoketolase"/>
</dbReference>
<dbReference type="InterPro" id="IPR029061">
    <property type="entry name" value="THDP-binding"/>
</dbReference>
<dbReference type="InterPro" id="IPR009014">
    <property type="entry name" value="Transketo_C/PFOR_II"/>
</dbReference>
<dbReference type="InterPro" id="IPR005593">
    <property type="entry name" value="Xul5P/Fru6P_PKetolase"/>
</dbReference>
<dbReference type="InterPro" id="IPR018969">
    <property type="entry name" value="Xul5P/Fru6P_PKetolase_C"/>
</dbReference>
<dbReference type="InterPro" id="IPR019790">
    <property type="entry name" value="Xul5P/Fru6P_PKetolase_CS"/>
</dbReference>
<dbReference type="InterPro" id="IPR018970">
    <property type="entry name" value="Xul5P/Fru6P_PKetolase_N"/>
</dbReference>
<dbReference type="InterPro" id="IPR019789">
    <property type="entry name" value="Xul5P/Fru6P_PKetolase_ThDP_BS"/>
</dbReference>
<dbReference type="NCBIfam" id="NF003616">
    <property type="entry name" value="PRK05261.1-1"/>
    <property type="match status" value="1"/>
</dbReference>
<dbReference type="NCBIfam" id="NF003617">
    <property type="entry name" value="PRK05261.1-2"/>
    <property type="match status" value="1"/>
</dbReference>
<dbReference type="NCBIfam" id="NF003619">
    <property type="entry name" value="PRK05261.1-4"/>
    <property type="match status" value="1"/>
</dbReference>
<dbReference type="NCBIfam" id="NF003621">
    <property type="entry name" value="PRK05261.1-6"/>
    <property type="match status" value="1"/>
</dbReference>
<dbReference type="PANTHER" id="PTHR31273">
    <property type="entry name" value="PHOSPHOKETOLASE-RELATED"/>
    <property type="match status" value="1"/>
</dbReference>
<dbReference type="PANTHER" id="PTHR31273:SF0">
    <property type="entry name" value="PHOSPHOKETOLASE-RELATED"/>
    <property type="match status" value="1"/>
</dbReference>
<dbReference type="Pfam" id="PF03894">
    <property type="entry name" value="XFP"/>
    <property type="match status" value="1"/>
</dbReference>
<dbReference type="Pfam" id="PF09363">
    <property type="entry name" value="XFP_C"/>
    <property type="match status" value="1"/>
</dbReference>
<dbReference type="Pfam" id="PF09364">
    <property type="entry name" value="XFP_N"/>
    <property type="match status" value="1"/>
</dbReference>
<dbReference type="PIRSF" id="PIRSF017245">
    <property type="entry name" value="Phosphoketolase"/>
    <property type="match status" value="1"/>
</dbReference>
<dbReference type="SUPFAM" id="SSF52518">
    <property type="entry name" value="Thiamin diphosphate-binding fold (THDP-binding)"/>
    <property type="match status" value="2"/>
</dbReference>
<dbReference type="PROSITE" id="PS60002">
    <property type="entry name" value="PHOSPHOKETOLASE_1"/>
    <property type="match status" value="1"/>
</dbReference>
<dbReference type="PROSITE" id="PS60003">
    <property type="entry name" value="PHOSPHOKETOLASE_2"/>
    <property type="match status" value="1"/>
</dbReference>
<proteinExistence type="inferred from homology"/>
<gene>
    <name type="ordered locus">RPD_1492</name>
</gene>
<organism>
    <name type="scientific">Rhodopseudomonas palustris (strain BisB5)</name>
    <dbReference type="NCBI Taxonomy" id="316057"/>
    <lineage>
        <taxon>Bacteria</taxon>
        <taxon>Pseudomonadati</taxon>
        <taxon>Pseudomonadota</taxon>
        <taxon>Alphaproteobacteria</taxon>
        <taxon>Hyphomicrobiales</taxon>
        <taxon>Nitrobacteraceae</taxon>
        <taxon>Rhodopseudomonas</taxon>
    </lineage>
</organism>
<keyword id="KW-0456">Lyase</keyword>
<keyword id="KW-0786">Thiamine pyrophosphate</keyword>
<feature type="chain" id="PRO_1000145458" description="Probable phosphoketolase">
    <location>
        <begin position="1"/>
        <end position="784"/>
    </location>
</feature>
<evidence type="ECO:0000255" key="1">
    <source>
        <dbReference type="HAMAP-Rule" id="MF_01403"/>
    </source>
</evidence>
<sequence>MFDVLSDDLMQKMDAYWRAANYLSVGQIYLQDNPLLEQPLRIEHIKPRLLGHWGTTPGLNLLYVHLNRLISAHDLDMIYIIGPGHGGPGLVANSYLEGSYTERYPAIERNRNGLQRLFRQFSWPNGVPSHVSPETPGSIHEGGELGYSLAHAYGAAFDNPDLIVACIVGDGEAETGALATSWHSNKFLNPARDGAVLPILHLNGFKIANPTILARIGRQELTDLMRGYGYEPIVVEGDDPKLVHHTLAAALERALADIRAIQAAARHQGVTVRPRWPMIILRTPKGWTGPKQVDGKQIEGTWRAHQVPIASFKDPTHVQLLETWLRSYRPEELFDASGKFRDDLAALAPTGHRRMSANPHANGGELLQPLSLPDFHDYAVTQSGPGTVKAEATRVLGAFLRDVMKSNLDAKNFRLFGPDETASNRLDAVLEVTDKEWMAEIEDVDVALGPDGRVMEVLSEHLCQGWLEGYLLTGRHGFFSCYEAFIHIVGSMFNQHAKWLKTCDAIPWRRPIASLNYLLTSHVWRQDHNGLSHQDPGFIDHVVNKKASVVRVYLPPDANCLLSVADHCLRSRNYVNLIVAGKQPEWQWLDIDSAVRHCSAGAGIWHWASNGEDDPDVVMACAGDVPTLETLAAVMLLREYVPDIRVRVVNVVDLMVLQPSSEHPHGLDDKRFDEIFTVDKPVVFAFHGYPWLIHRLTYRRRNHFNIHVRGYKEEGSTTTPFDMVVLNDLDRYRLALDAIRRIPRLAGEVEAATARYWATMQRHKLYIGEHGDDMPEVRDWSWQG</sequence>
<name>PHK_RHOPS</name>
<reference key="1">
    <citation type="submission" date="2006-03" db="EMBL/GenBank/DDBJ databases">
        <title>Complete sequence of Rhodopseudomonas palustris BisB5.</title>
        <authorList>
            <consortium name="US DOE Joint Genome Institute"/>
            <person name="Copeland A."/>
            <person name="Lucas S."/>
            <person name="Lapidus A."/>
            <person name="Barry K."/>
            <person name="Detter J.C."/>
            <person name="Glavina del Rio T."/>
            <person name="Hammon N."/>
            <person name="Israni S."/>
            <person name="Dalin E."/>
            <person name="Tice H."/>
            <person name="Pitluck S."/>
            <person name="Chain P."/>
            <person name="Malfatti S."/>
            <person name="Shin M."/>
            <person name="Vergez L."/>
            <person name="Schmutz J."/>
            <person name="Larimer F."/>
            <person name="Land M."/>
            <person name="Hauser L."/>
            <person name="Pelletier D.A."/>
            <person name="Kyrpides N."/>
            <person name="Lykidis A."/>
            <person name="Oda Y."/>
            <person name="Harwood C.S."/>
            <person name="Richardson P."/>
        </authorList>
    </citation>
    <scope>NUCLEOTIDE SEQUENCE [LARGE SCALE GENOMIC DNA]</scope>
    <source>
        <strain>BisB5</strain>
    </source>
</reference>
<comment type="cofactor">
    <cofactor evidence="1">
        <name>thiamine diphosphate</name>
        <dbReference type="ChEBI" id="CHEBI:58937"/>
    </cofactor>
</comment>
<comment type="similarity">
    <text evidence="1">Belongs to the XFP family.</text>
</comment>